<gene>
    <name type="ordered locus">Helmi_22490</name>
    <name type="ORF">HM1_2341</name>
</gene>
<keyword id="KW-0547">Nucleotide-binding</keyword>
<keyword id="KW-1185">Reference proteome</keyword>
<proteinExistence type="inferred from homology"/>
<name>Y2249_HELMI</name>
<organism>
    <name type="scientific">Heliobacterium modesticaldum (strain ATCC 51547 / Ice1)</name>
    <dbReference type="NCBI Taxonomy" id="498761"/>
    <lineage>
        <taxon>Bacteria</taxon>
        <taxon>Bacillati</taxon>
        <taxon>Bacillota</taxon>
        <taxon>Clostridia</taxon>
        <taxon>Eubacteriales</taxon>
        <taxon>Heliobacteriaceae</taxon>
        <taxon>Heliomicrobium</taxon>
    </lineage>
</organism>
<feature type="chain" id="PRO_1000130632" description="Nucleotide-binding protein Helmi_22490">
    <location>
        <begin position="1"/>
        <end position="164"/>
    </location>
</feature>
<accession>B0THU1</accession>
<dbReference type="EMBL" id="CP000930">
    <property type="protein sequence ID" value="ABZ84874.1"/>
    <property type="molecule type" value="Genomic_DNA"/>
</dbReference>
<dbReference type="RefSeq" id="WP_012283372.1">
    <property type="nucleotide sequence ID" value="NC_010337.2"/>
</dbReference>
<dbReference type="SMR" id="B0THU1"/>
<dbReference type="STRING" id="498761.HM1_2341"/>
<dbReference type="KEGG" id="hmo:HM1_2341"/>
<dbReference type="eggNOG" id="COG1666">
    <property type="taxonomic scope" value="Bacteria"/>
</dbReference>
<dbReference type="HOGENOM" id="CLU_099839_1_0_9"/>
<dbReference type="OrthoDB" id="9801447at2"/>
<dbReference type="Proteomes" id="UP000008550">
    <property type="component" value="Chromosome"/>
</dbReference>
<dbReference type="GO" id="GO:0005829">
    <property type="term" value="C:cytosol"/>
    <property type="evidence" value="ECO:0007669"/>
    <property type="project" value="TreeGrafter"/>
</dbReference>
<dbReference type="GO" id="GO:0000166">
    <property type="term" value="F:nucleotide binding"/>
    <property type="evidence" value="ECO:0007669"/>
    <property type="project" value="TreeGrafter"/>
</dbReference>
<dbReference type="CDD" id="cd11740">
    <property type="entry name" value="YajQ_like"/>
    <property type="match status" value="1"/>
</dbReference>
<dbReference type="Gene3D" id="3.30.70.860">
    <property type="match status" value="1"/>
</dbReference>
<dbReference type="Gene3D" id="3.30.70.990">
    <property type="entry name" value="YajQ-like, domain 2"/>
    <property type="match status" value="1"/>
</dbReference>
<dbReference type="HAMAP" id="MF_00632">
    <property type="entry name" value="YajQ"/>
    <property type="match status" value="1"/>
</dbReference>
<dbReference type="InterPro" id="IPR007551">
    <property type="entry name" value="DUF520"/>
</dbReference>
<dbReference type="InterPro" id="IPR035571">
    <property type="entry name" value="UPF0234-like_C"/>
</dbReference>
<dbReference type="InterPro" id="IPR035570">
    <property type="entry name" value="UPF0234_N"/>
</dbReference>
<dbReference type="InterPro" id="IPR036183">
    <property type="entry name" value="YajQ-like_sf"/>
</dbReference>
<dbReference type="NCBIfam" id="NF003819">
    <property type="entry name" value="PRK05412.1"/>
    <property type="match status" value="1"/>
</dbReference>
<dbReference type="PANTHER" id="PTHR30476">
    <property type="entry name" value="UPF0234 PROTEIN YAJQ"/>
    <property type="match status" value="1"/>
</dbReference>
<dbReference type="PANTHER" id="PTHR30476:SF0">
    <property type="entry name" value="UPF0234 PROTEIN YAJQ"/>
    <property type="match status" value="1"/>
</dbReference>
<dbReference type="Pfam" id="PF04461">
    <property type="entry name" value="DUF520"/>
    <property type="match status" value="1"/>
</dbReference>
<dbReference type="SUPFAM" id="SSF89963">
    <property type="entry name" value="YajQ-like"/>
    <property type="match status" value="2"/>
</dbReference>
<evidence type="ECO:0000255" key="1">
    <source>
        <dbReference type="HAMAP-Rule" id="MF_00632"/>
    </source>
</evidence>
<protein>
    <recommendedName>
        <fullName evidence="1">Nucleotide-binding protein Helmi_22490</fullName>
    </recommendedName>
</protein>
<reference key="1">
    <citation type="journal article" date="2008" name="J. Bacteriol.">
        <title>The genome of Heliobacterium modesticaldum, a phototrophic representative of the Firmicutes containing the simplest photosynthetic apparatus.</title>
        <authorList>
            <person name="Sattley W.M."/>
            <person name="Madigan M.T."/>
            <person name="Swingley W.D."/>
            <person name="Cheung P.C."/>
            <person name="Clocksin K.M."/>
            <person name="Conrad A.L."/>
            <person name="Dejesa L.C."/>
            <person name="Honchak B.M."/>
            <person name="Jung D.O."/>
            <person name="Karbach L.E."/>
            <person name="Kurdoglu A."/>
            <person name="Lahiri S."/>
            <person name="Mastrian S.D."/>
            <person name="Page L.E."/>
            <person name="Taylor H.L."/>
            <person name="Wang Z.T."/>
            <person name="Raymond J."/>
            <person name="Chen M."/>
            <person name="Blankenship R.E."/>
            <person name="Touchman J.W."/>
        </authorList>
    </citation>
    <scope>NUCLEOTIDE SEQUENCE [LARGE SCALE GENOMIC DNA]</scope>
    <source>
        <strain>ATCC 51547 / Ice1</strain>
    </source>
</reference>
<comment type="function">
    <text evidence="1">Nucleotide-binding protein.</text>
</comment>
<comment type="similarity">
    <text evidence="1">Belongs to the YajQ family.</text>
</comment>
<sequence length="164" mass="18478">MAKDASFDIVSQVDEQEVTNAVHQAVKEMEQRFDFKGSKSEIRQEQGAIILVSDDEFKLKNVTDILEAKMVKRGISLRALRYGKIESAAGDMVRQKVDLVQGISKENAKKITKLIKDSKIKVQTSVQGDQIRVSGNKRDDLQAVIALLRKADLDIELQFINFRS</sequence>